<name>LACA_STAAR</name>
<accession>Q6GEN4</accession>
<reference key="1">
    <citation type="journal article" date="2004" name="Proc. Natl. Acad. Sci. U.S.A.">
        <title>Complete genomes of two clinical Staphylococcus aureus strains: evidence for the rapid evolution of virulence and drug resistance.</title>
        <authorList>
            <person name="Holden M.T.G."/>
            <person name="Feil E.J."/>
            <person name="Lindsay J.A."/>
            <person name="Peacock S.J."/>
            <person name="Day N.P.J."/>
            <person name="Enright M.C."/>
            <person name="Foster T.J."/>
            <person name="Moore C.E."/>
            <person name="Hurst L."/>
            <person name="Atkin R."/>
            <person name="Barron A."/>
            <person name="Bason N."/>
            <person name="Bentley S.D."/>
            <person name="Chillingworth C."/>
            <person name="Chillingworth T."/>
            <person name="Churcher C."/>
            <person name="Clark L."/>
            <person name="Corton C."/>
            <person name="Cronin A."/>
            <person name="Doggett J."/>
            <person name="Dowd L."/>
            <person name="Feltwell T."/>
            <person name="Hance Z."/>
            <person name="Harris B."/>
            <person name="Hauser H."/>
            <person name="Holroyd S."/>
            <person name="Jagels K."/>
            <person name="James K.D."/>
            <person name="Lennard N."/>
            <person name="Line A."/>
            <person name="Mayes R."/>
            <person name="Moule S."/>
            <person name="Mungall K."/>
            <person name="Ormond D."/>
            <person name="Quail M.A."/>
            <person name="Rabbinowitsch E."/>
            <person name="Rutherford K.M."/>
            <person name="Sanders M."/>
            <person name="Sharp S."/>
            <person name="Simmonds M."/>
            <person name="Stevens K."/>
            <person name="Whitehead S."/>
            <person name="Barrell B.G."/>
            <person name="Spratt B.G."/>
            <person name="Parkhill J."/>
        </authorList>
    </citation>
    <scope>NUCLEOTIDE SEQUENCE [LARGE SCALE GENOMIC DNA]</scope>
    <source>
        <strain>MRSA252</strain>
    </source>
</reference>
<protein>
    <recommendedName>
        <fullName evidence="1">Galactose-6-phosphate isomerase subunit LacA</fullName>
        <ecNumber evidence="1">5.3.1.26</ecNumber>
    </recommendedName>
</protein>
<evidence type="ECO:0000255" key="1">
    <source>
        <dbReference type="HAMAP-Rule" id="MF_01555"/>
    </source>
</evidence>
<comment type="catalytic activity">
    <reaction evidence="1">
        <text>aldehydo-D-galactose 6-phosphate = keto-D-tagatose 6-phosphate</text>
        <dbReference type="Rhea" id="RHEA:13033"/>
        <dbReference type="ChEBI" id="CHEBI:58255"/>
        <dbReference type="ChEBI" id="CHEBI:134283"/>
        <dbReference type="EC" id="5.3.1.26"/>
    </reaction>
</comment>
<comment type="pathway">
    <text evidence="1">Carbohydrate metabolism; D-galactose 6-phosphate degradation; D-tagatose 6-phosphate from D-galactose 6-phosphate: step 1/1.</text>
</comment>
<comment type="subunit">
    <text evidence="1">Heteromultimeric protein consisting of LacA and LacB.</text>
</comment>
<comment type="similarity">
    <text evidence="1">Belongs to the LacAB/RpiB family.</text>
</comment>
<keyword id="KW-0413">Isomerase</keyword>
<keyword id="KW-0423">Lactose metabolism</keyword>
<sequence>MAIIIGSDEAGKRLKEVIKSYLLDNKYDVVDVTEGQEVDFVDATLAVAKDVQSQEGNLGIVIDAFGAGSFMVATKIKGMIAAEVSDERSGYMTRGHNNSRMITMGSEIVGDTLAKNVVKGFVEGKYDGGRHQIRVDMLNKMC</sequence>
<proteinExistence type="inferred from homology"/>
<organism>
    <name type="scientific">Staphylococcus aureus (strain MRSA252)</name>
    <dbReference type="NCBI Taxonomy" id="282458"/>
    <lineage>
        <taxon>Bacteria</taxon>
        <taxon>Bacillati</taxon>
        <taxon>Bacillota</taxon>
        <taxon>Bacilli</taxon>
        <taxon>Bacillales</taxon>
        <taxon>Staphylococcaceae</taxon>
        <taxon>Staphylococcus</taxon>
    </lineage>
</organism>
<gene>
    <name evidence="1" type="primary">lacA</name>
    <name type="ordered locus">SAR2286</name>
</gene>
<feature type="chain" id="PRO_0000208107" description="Galactose-6-phosphate isomerase subunit LacA">
    <location>
        <begin position="1"/>
        <end position="142"/>
    </location>
</feature>
<dbReference type="EC" id="5.3.1.26" evidence="1"/>
<dbReference type="EMBL" id="BX571856">
    <property type="protein sequence ID" value="CAG41264.1"/>
    <property type="molecule type" value="Genomic_DNA"/>
</dbReference>
<dbReference type="RefSeq" id="WP_000974608.1">
    <property type="nucleotide sequence ID" value="NC_002952.2"/>
</dbReference>
<dbReference type="SMR" id="Q6GEN4"/>
<dbReference type="GeneID" id="98347039"/>
<dbReference type="KEGG" id="sar:SAR2286"/>
<dbReference type="HOGENOM" id="CLU_091396_4_2_9"/>
<dbReference type="UniPathway" id="UPA00702">
    <property type="reaction ID" value="UER00714"/>
</dbReference>
<dbReference type="Proteomes" id="UP000000596">
    <property type="component" value="Chromosome"/>
</dbReference>
<dbReference type="GO" id="GO:0050044">
    <property type="term" value="F:galactose-6-phosphate isomerase activity"/>
    <property type="evidence" value="ECO:0007669"/>
    <property type="project" value="UniProtKB-UniRule"/>
</dbReference>
<dbReference type="GO" id="GO:0004751">
    <property type="term" value="F:ribose-5-phosphate isomerase activity"/>
    <property type="evidence" value="ECO:0007669"/>
    <property type="project" value="TreeGrafter"/>
</dbReference>
<dbReference type="GO" id="GO:0019316">
    <property type="term" value="P:D-allose catabolic process"/>
    <property type="evidence" value="ECO:0007669"/>
    <property type="project" value="TreeGrafter"/>
</dbReference>
<dbReference type="GO" id="GO:0019388">
    <property type="term" value="P:galactose catabolic process"/>
    <property type="evidence" value="ECO:0007669"/>
    <property type="project" value="UniProtKB-UniPathway"/>
</dbReference>
<dbReference type="GO" id="GO:0019512">
    <property type="term" value="P:lactose catabolic process via tagatose-6-phosphate"/>
    <property type="evidence" value="ECO:0007669"/>
    <property type="project" value="UniProtKB-UniRule"/>
</dbReference>
<dbReference type="GO" id="GO:0009052">
    <property type="term" value="P:pentose-phosphate shunt, non-oxidative branch"/>
    <property type="evidence" value="ECO:0007669"/>
    <property type="project" value="TreeGrafter"/>
</dbReference>
<dbReference type="Gene3D" id="3.40.1400.10">
    <property type="entry name" value="Sugar-phosphate isomerase, RpiB/LacA/LacB"/>
    <property type="match status" value="1"/>
</dbReference>
<dbReference type="HAMAP" id="MF_01555">
    <property type="entry name" value="LacA"/>
    <property type="match status" value="1"/>
</dbReference>
<dbReference type="InterPro" id="IPR004783">
    <property type="entry name" value="LacA"/>
</dbReference>
<dbReference type="InterPro" id="IPR003500">
    <property type="entry name" value="RpiB_LacA_LacB"/>
</dbReference>
<dbReference type="InterPro" id="IPR036569">
    <property type="entry name" value="RpiB_LacA_LacB_sf"/>
</dbReference>
<dbReference type="NCBIfam" id="TIGR01118">
    <property type="entry name" value="lacA"/>
    <property type="match status" value="1"/>
</dbReference>
<dbReference type="NCBIfam" id="NF006380">
    <property type="entry name" value="PRK08621.1"/>
    <property type="match status" value="1"/>
</dbReference>
<dbReference type="NCBIfam" id="TIGR00689">
    <property type="entry name" value="rpiB_lacA_lacB"/>
    <property type="match status" value="1"/>
</dbReference>
<dbReference type="PANTHER" id="PTHR30345:SF5">
    <property type="entry name" value="GALACTOSE-6-PHOSPHATE ISOMERASE SUBUNIT LACA"/>
    <property type="match status" value="1"/>
</dbReference>
<dbReference type="PANTHER" id="PTHR30345">
    <property type="entry name" value="RIBOSE-5-PHOSPHATE ISOMERASE B"/>
    <property type="match status" value="1"/>
</dbReference>
<dbReference type="Pfam" id="PF02502">
    <property type="entry name" value="LacAB_rpiB"/>
    <property type="match status" value="1"/>
</dbReference>
<dbReference type="PIRSF" id="PIRSF005384">
    <property type="entry name" value="RpiB_LacA_B"/>
    <property type="match status" value="1"/>
</dbReference>
<dbReference type="SUPFAM" id="SSF89623">
    <property type="entry name" value="Ribose/Galactose isomerase RpiB/AlsB"/>
    <property type="match status" value="1"/>
</dbReference>